<feature type="chain" id="PRO_0000063645" description="Keratin, type I cytoskeletal 12">
    <location>
        <begin position="1"/>
        <end position="487"/>
    </location>
</feature>
<feature type="domain" description="IF rod" evidence="1">
    <location>
        <begin position="119"/>
        <end position="433"/>
    </location>
</feature>
<feature type="region of interest" description="Head">
    <location>
        <begin position="1"/>
        <end position="118"/>
    </location>
</feature>
<feature type="region of interest" description="Coil 1A">
    <location>
        <begin position="119"/>
        <end position="154"/>
    </location>
</feature>
<feature type="region of interest" description="Linker 1">
    <location>
        <begin position="158"/>
        <end position="175"/>
    </location>
</feature>
<feature type="region of interest" description="Coil 1B">
    <location>
        <begin position="176"/>
        <end position="267"/>
    </location>
</feature>
<feature type="region of interest" description="Linker 12">
    <location>
        <begin position="268"/>
        <end position="290"/>
    </location>
</feature>
<feature type="region of interest" description="Coil 2">
    <location>
        <begin position="291"/>
        <end position="428"/>
    </location>
</feature>
<feature type="region of interest" description="Disordered" evidence="2">
    <location>
        <begin position="428"/>
        <end position="461"/>
    </location>
</feature>
<feature type="region of interest" description="Tail">
    <location>
        <begin position="429"/>
        <end position="487"/>
    </location>
</feature>
<feature type="compositionally biased region" description="Polar residues" evidence="2">
    <location>
        <begin position="437"/>
        <end position="452"/>
    </location>
</feature>
<feature type="splice variant" id="VSP_002463" description="In isoform 2." evidence="7">
    <original>YE</original>
    <variation>KL</variation>
    <location>
        <begin position="211"/>
        <end position="212"/>
    </location>
</feature>
<feature type="splice variant" id="VSP_002464" description="In isoform 2." evidence="7">
    <location>
        <begin position="213"/>
        <end position="487"/>
    </location>
</feature>
<feature type="sequence conflict" description="In Ref. 1; AAA17792 and 2; AAA52359." evidence="7" ref="1 2">
    <original>A</original>
    <variation>S</variation>
    <location>
        <position position="9"/>
    </location>
</feature>
<feature type="sequence conflict" description="In Ref. 1; AAA17792 and 2; AAA52359." evidence="7" ref="1 2">
    <original>M</original>
    <variation>I</variation>
    <location>
        <position position="89"/>
    </location>
</feature>
<feature type="sequence conflict" description="In Ref. 1; AAA17792 and 2; AAA52359." evidence="7" ref="1 2">
    <original>MGIAGSSGG</original>
    <variation>IGDSWNAGV</variation>
    <location>
        <begin position="93"/>
        <end position="101"/>
    </location>
</feature>
<feature type="sequence conflict" description="In Ref. 3; CAM21364." evidence="7" ref="3">
    <original>G</original>
    <variation>R</variation>
    <location>
        <position position="318"/>
    </location>
</feature>
<sequence length="487" mass="52464">MSLSVCTSALSRRSSSQNGAAGRPWGASASSVAGGYGGSASGFGVGCGGLFSAASMFGSSSGFSGGSAGCLPGLGSAYGGPLRGGAGGMGIGMGIAGSSGGGSLCIFSGNDGGLLSGSEKETMQNLNDRLASYLGKVRSLEEANAELENKIREWYETRRTRDAGSQSDYSKYYPLIEDLKNKIVSARVSNAQLLLQIDNARLAAEDFRMKYENELALRQTVEADINGLRRVLDELTLTRADLEAQLETLTEELAYMKKNHEEELQSFQAGGPGEVNVEMDAAPGVDLTKVLNEMRAQYEAMAEQNRKDAEAWFLEKSGELRKEISSNTEQLQSSKSEVTDLKRMVQNLEIELQSQLAMKSSLEGSLAETEGGYCCQLSQVQQLIGSLEEQLQQVRADAERQNADHQRLLGVKARLEMEIETYRRLLEGDSQGDGFDESSSLSVSKPQTPSVDSSKDPNKTRKIKTVVQEIVNGEVVSSQVQELEEEM</sequence>
<comment type="function">
    <text evidence="6">Involved in corneal epithelium organization, integrity and corneal keratin expression.</text>
</comment>
<comment type="subunit">
    <text>Heterotetramer of two type I and two type II keratins. Keratin-3 associates with keratin-12.</text>
</comment>
<comment type="alternative products">
    <event type="alternative splicing"/>
    <isoform>
        <id>Q64291-1</id>
        <name>1</name>
        <sequence type="displayed"/>
    </isoform>
    <isoform>
        <id>Q64291-2</id>
        <name>2</name>
        <name>K12-ALT9</name>
        <sequence type="described" ref="VSP_002463 VSP_002464"/>
    </isoform>
</comment>
<comment type="tissue specificity">
    <text evidence="4 5 6">Expressed in the corneal epithelium (at protein level) (PubMed:26758872, PubMed:7508359, PubMed:8977471). Also expressed in the suprabasal limbal epithelium of the cornea (at protein level) (PubMed:7508359).</text>
</comment>
<comment type="developmental stage">
    <text evidence="3 5">Expression commences in corneal peridermal epithelium in the embryo at 15.5 dpc (PubMed:16431949). Between 15.5 dpc and postnatal day 4 (P4), expression is restricted to the suprabasal and/or superficial cells when the corneal epithelium begins to stratify (PubMed:16431949, PubMed:7508359). At P30 expression is sporadically detected in the basal corneal epithelium and the number of positive basal cells increases as the mice grow older (PubMed:16431949).</text>
</comment>
<comment type="induction">
    <text evidence="5">Expression is retarded by epidermal growth factor (EGF).</text>
</comment>
<comment type="disruption phenotype">
    <text evidence="6">Knockout mice are fertile and morphologically normal with no defects in the skin or hair (PubMed:8977471). Corneal epithelia show histological abnormalities and can be easily detached from the corneal surface (PubMed:8977471). Reduced number of cell layers in the corneal epithelium, with superficial epithelial cells showing reduced adherence to underlying cell layers (PubMed:8977471). Keratin intermediate filaments aggregate into dense bundles in the corneal epithelium, with a reduced number of keratin filaments in basal and suprabasal epithelial cells, and an absence of keratin filaments in superficial epithelial cells (PubMed:8977471).</text>
</comment>
<comment type="miscellaneous">
    <text>There are two types of cytoskeletal and microfibrillar keratin: I (acidic; 40-55 kDa) and II (neutral to basic; 56-70 kDa).</text>
</comment>
<comment type="similarity">
    <text evidence="1">Belongs to the intermediate filament family.</text>
</comment>
<comment type="sequence caution" evidence="7">
    <conflict type="frameshift">
        <sequence resource="EMBL-CDS" id="AAA17792"/>
    </conflict>
</comment>
<comment type="sequence caution" evidence="7">
    <conflict type="frameshift">
        <sequence resource="EMBL-CDS" id="AAA52359"/>
    </conflict>
</comment>
<keyword id="KW-0025">Alternative splicing</keyword>
<keyword id="KW-0175">Coiled coil</keyword>
<keyword id="KW-0903">Direct protein sequencing</keyword>
<keyword id="KW-0403">Intermediate filament</keyword>
<keyword id="KW-0416">Keratin</keyword>
<keyword id="KW-1185">Reference proteome</keyword>
<organism>
    <name type="scientific">Mus musculus</name>
    <name type="common">Mouse</name>
    <dbReference type="NCBI Taxonomy" id="10090"/>
    <lineage>
        <taxon>Eukaryota</taxon>
        <taxon>Metazoa</taxon>
        <taxon>Chordata</taxon>
        <taxon>Craniata</taxon>
        <taxon>Vertebrata</taxon>
        <taxon>Euteleostomi</taxon>
        <taxon>Mammalia</taxon>
        <taxon>Eutheria</taxon>
        <taxon>Euarchontoglires</taxon>
        <taxon>Glires</taxon>
        <taxon>Rodentia</taxon>
        <taxon>Myomorpha</taxon>
        <taxon>Muroidea</taxon>
        <taxon>Muridae</taxon>
        <taxon>Murinae</taxon>
        <taxon>Mus</taxon>
        <taxon>Mus</taxon>
    </lineage>
</organism>
<dbReference type="EMBL" id="U02880">
    <property type="protein sequence ID" value="AAA17792.1"/>
    <property type="status" value="ALT_FRAME"/>
    <property type="molecule type" value="mRNA"/>
</dbReference>
<dbReference type="EMBL" id="U08095">
    <property type="protein sequence ID" value="AAA52359.1"/>
    <property type="status" value="ALT_FRAME"/>
    <property type="molecule type" value="Genomic_DNA"/>
</dbReference>
<dbReference type="EMBL" id="AL591165">
    <property type="protein sequence ID" value="CAM21364.1"/>
    <property type="molecule type" value="Genomic_DNA"/>
</dbReference>
<dbReference type="EMBL" id="BC131911">
    <property type="protein sequence ID" value="AAI31912.1"/>
    <property type="molecule type" value="mRNA"/>
</dbReference>
<dbReference type="CCDS" id="CCDS36306.1">
    <molecule id="Q64291-1"/>
</dbReference>
<dbReference type="PIR" id="A55033">
    <property type="entry name" value="A55033"/>
</dbReference>
<dbReference type="SMR" id="Q64291"/>
<dbReference type="FunCoup" id="Q64291">
    <property type="interactions" value="25"/>
</dbReference>
<dbReference type="STRING" id="10090.ENSMUSP00000017741"/>
<dbReference type="GlyGen" id="Q64291">
    <property type="glycosylation" value="1 site, 1 O-linked glycan (1 site)"/>
</dbReference>
<dbReference type="PhosphoSitePlus" id="Q64291"/>
<dbReference type="PaxDb" id="10090-ENSMUSP00000017741"/>
<dbReference type="PeptideAtlas" id="Q64291"/>
<dbReference type="ProteomicsDB" id="269440">
    <molecule id="Q64291-1"/>
</dbReference>
<dbReference type="ProteomicsDB" id="269441">
    <molecule id="Q64291-2"/>
</dbReference>
<dbReference type="AGR" id="MGI:96687"/>
<dbReference type="MGI" id="MGI:96687">
    <property type="gene designation" value="Krt12"/>
</dbReference>
<dbReference type="eggNOG" id="ENOG502QTM6">
    <property type="taxonomic scope" value="Eukaryota"/>
</dbReference>
<dbReference type="InParanoid" id="Q64291"/>
<dbReference type="PhylomeDB" id="Q64291"/>
<dbReference type="TreeFam" id="TF332742"/>
<dbReference type="Reactome" id="R-MMU-6805567">
    <property type="pathway name" value="Keratinization"/>
</dbReference>
<dbReference type="Reactome" id="R-MMU-6809371">
    <property type="pathway name" value="Formation of the cornified envelope"/>
</dbReference>
<dbReference type="PRO" id="PR:Q64291"/>
<dbReference type="Proteomes" id="UP000000589">
    <property type="component" value="Unplaced"/>
</dbReference>
<dbReference type="RNAct" id="Q64291">
    <property type="molecule type" value="protein"/>
</dbReference>
<dbReference type="GO" id="GO:0005882">
    <property type="term" value="C:intermediate filament"/>
    <property type="evidence" value="ECO:0007669"/>
    <property type="project" value="UniProtKB-KW"/>
</dbReference>
<dbReference type="GO" id="GO:0005198">
    <property type="term" value="F:structural molecule activity"/>
    <property type="evidence" value="ECO:0007669"/>
    <property type="project" value="InterPro"/>
</dbReference>
<dbReference type="GO" id="GO:0061303">
    <property type="term" value="P:cornea development in camera-type eye"/>
    <property type="evidence" value="ECO:0000315"/>
    <property type="project" value="UniProtKB"/>
</dbReference>
<dbReference type="GO" id="GO:0060429">
    <property type="term" value="P:epithelium development"/>
    <property type="evidence" value="ECO:0000315"/>
    <property type="project" value="MGI"/>
</dbReference>
<dbReference type="GO" id="GO:0002009">
    <property type="term" value="P:morphogenesis of an epithelium"/>
    <property type="evidence" value="ECO:0000315"/>
    <property type="project" value="UniProtKB"/>
</dbReference>
<dbReference type="FunFam" id="1.20.5.1160:FF:000002">
    <property type="entry name" value="Type I keratin 10"/>
    <property type="match status" value="1"/>
</dbReference>
<dbReference type="FunFam" id="1.20.5.170:FF:000002">
    <property type="entry name" value="Type I keratin KA11"/>
    <property type="match status" value="1"/>
</dbReference>
<dbReference type="FunFam" id="1.20.5.500:FF:000001">
    <property type="entry name" value="Type II keratin 23"/>
    <property type="match status" value="1"/>
</dbReference>
<dbReference type="Gene3D" id="1.20.5.170">
    <property type="match status" value="1"/>
</dbReference>
<dbReference type="Gene3D" id="1.20.5.500">
    <property type="entry name" value="Single helix bin"/>
    <property type="match status" value="1"/>
</dbReference>
<dbReference type="Gene3D" id="1.20.5.1160">
    <property type="entry name" value="Vasodilator-stimulated phosphoprotein"/>
    <property type="match status" value="1"/>
</dbReference>
<dbReference type="InterPro" id="IPR018039">
    <property type="entry name" value="IF_conserved"/>
</dbReference>
<dbReference type="InterPro" id="IPR039008">
    <property type="entry name" value="IF_rod_dom"/>
</dbReference>
<dbReference type="InterPro" id="IPR002957">
    <property type="entry name" value="Keratin_I"/>
</dbReference>
<dbReference type="PANTHER" id="PTHR23239">
    <property type="entry name" value="INTERMEDIATE FILAMENT"/>
    <property type="match status" value="1"/>
</dbReference>
<dbReference type="PANTHER" id="PTHR23239:SF369">
    <property type="entry name" value="KERATIN, TYPE I CYTOSKELETAL 12"/>
    <property type="match status" value="1"/>
</dbReference>
<dbReference type="Pfam" id="PF00038">
    <property type="entry name" value="Filament"/>
    <property type="match status" value="1"/>
</dbReference>
<dbReference type="PRINTS" id="PR01248">
    <property type="entry name" value="TYPE1KERATIN"/>
</dbReference>
<dbReference type="SMART" id="SM01391">
    <property type="entry name" value="Filament"/>
    <property type="match status" value="1"/>
</dbReference>
<dbReference type="SUPFAM" id="SSF64593">
    <property type="entry name" value="Intermediate filament protein, coiled coil region"/>
    <property type="match status" value="2"/>
</dbReference>
<dbReference type="SUPFAM" id="SSF46579">
    <property type="entry name" value="Prefoldin"/>
    <property type="match status" value="1"/>
</dbReference>
<dbReference type="PROSITE" id="PS00226">
    <property type="entry name" value="IF_ROD_1"/>
    <property type="match status" value="1"/>
</dbReference>
<dbReference type="PROSITE" id="PS51842">
    <property type="entry name" value="IF_ROD_2"/>
    <property type="match status" value="1"/>
</dbReference>
<gene>
    <name type="primary">Krt12</name>
    <name type="synonym">Krt1-12</name>
    <name type="synonym">Krt1.12</name>
</gene>
<evidence type="ECO:0000255" key="1">
    <source>
        <dbReference type="PROSITE-ProRule" id="PRU01188"/>
    </source>
</evidence>
<evidence type="ECO:0000256" key="2">
    <source>
        <dbReference type="SAM" id="MobiDB-lite"/>
    </source>
</evidence>
<evidence type="ECO:0000269" key="3">
    <source>
    </source>
</evidence>
<evidence type="ECO:0000269" key="4">
    <source>
    </source>
</evidence>
<evidence type="ECO:0000269" key="5">
    <source>
    </source>
</evidence>
<evidence type="ECO:0000269" key="6">
    <source>
    </source>
</evidence>
<evidence type="ECO:0000305" key="7"/>
<protein>
    <recommendedName>
        <fullName>Keratin, type I cytoskeletal 12</fullName>
    </recommendedName>
    <alternativeName>
        <fullName>Cytokeratin-12</fullName>
        <shortName>CK-12</shortName>
    </alternativeName>
    <alternativeName>
        <fullName>Keratin-12</fullName>
        <shortName>K12</shortName>
    </alternativeName>
</protein>
<name>K1C12_MOUSE</name>
<accession>Q64291</accession>
<accession>A2A514</accession>
<accession>A2RRZ0</accession>
<reference key="1">
    <citation type="journal article" date="1993" name="Curr. Eye Res.">
        <title>Cornea-specific expression of K12 keratin during mouse development.</title>
        <authorList>
            <person name="Liu C.-Y."/>
            <person name="Zhu G."/>
            <person name="Westerhausen-Larson A."/>
            <person name="Converse R."/>
            <person name="Kao C.W.-C."/>
            <person name="Sun T.-T."/>
            <person name="Kao W.W.-Y."/>
        </authorList>
    </citation>
    <scope>NUCLEOTIDE SEQUENCE [MRNA]</scope>
    <scope>TISSUE SPECIFICITY</scope>
    <scope>DEVELOPMENTAL STAGE</scope>
    <scope>INDUCTION</scope>
    <source>
        <strain>FVB/N</strain>
        <tissue>Cornea</tissue>
    </source>
</reference>
<reference key="2">
    <citation type="journal article" date="1994" name="J. Biol. Chem.">
        <title>Characterization and chromosomal localization of the cornea-specific murine keratin gene Krt1.12.</title>
        <authorList>
            <person name="Liu C.-Y."/>
            <person name="Zhu G."/>
            <person name="Converse R."/>
            <person name="Kao C.W.-C."/>
            <person name="Nakamura H."/>
            <person name="Tseng S.C.-G."/>
            <person name="Mui M.-M."/>
            <person name="Seyer J."/>
            <person name="Justice M.J."/>
            <person name="Stech M.E."/>
            <person name="Hansen G.M."/>
            <person name="Kao W.W.-Y."/>
        </authorList>
    </citation>
    <scope>NUCLEOTIDE SEQUENCE [GENOMIC DNA]</scope>
    <source>
        <strain>129/SvJ</strain>
        <tissue>Cornea</tissue>
    </source>
</reference>
<reference key="3">
    <citation type="journal article" date="2009" name="PLoS Biol.">
        <title>Lineage-specific biology revealed by a finished genome assembly of the mouse.</title>
        <authorList>
            <person name="Church D.M."/>
            <person name="Goodstadt L."/>
            <person name="Hillier L.W."/>
            <person name="Zody M.C."/>
            <person name="Goldstein S."/>
            <person name="She X."/>
            <person name="Bult C.J."/>
            <person name="Agarwala R."/>
            <person name="Cherry J.L."/>
            <person name="DiCuccio M."/>
            <person name="Hlavina W."/>
            <person name="Kapustin Y."/>
            <person name="Meric P."/>
            <person name="Maglott D."/>
            <person name="Birtle Z."/>
            <person name="Marques A.C."/>
            <person name="Graves T."/>
            <person name="Zhou S."/>
            <person name="Teague B."/>
            <person name="Potamousis K."/>
            <person name="Churas C."/>
            <person name="Place M."/>
            <person name="Herschleb J."/>
            <person name="Runnheim R."/>
            <person name="Forrest D."/>
            <person name="Amos-Landgraf J."/>
            <person name="Schwartz D.C."/>
            <person name="Cheng Z."/>
            <person name="Lindblad-Toh K."/>
            <person name="Eichler E.E."/>
            <person name="Ponting C.P."/>
        </authorList>
    </citation>
    <scope>NUCLEOTIDE SEQUENCE [LARGE SCALE GENOMIC DNA]</scope>
    <source>
        <strain>C57BL/6J</strain>
    </source>
</reference>
<reference key="4">
    <citation type="journal article" date="2004" name="Genome Res.">
        <title>The status, quality, and expansion of the NIH full-length cDNA project: the Mammalian Gene Collection (MGC).</title>
        <authorList>
            <consortium name="The MGC Project Team"/>
        </authorList>
    </citation>
    <scope>NUCLEOTIDE SEQUENCE [LARGE SCALE MRNA]</scope>
    <source>
        <tissue>Brain</tissue>
    </source>
</reference>
<reference key="5">
    <citation type="submission" date="2009-01" db="UniProtKB">
        <authorList>
            <person name="Lubec G."/>
            <person name="Sunyer B."/>
            <person name="Chen W.-Q."/>
        </authorList>
    </citation>
    <scope>PROTEIN SEQUENCE OF 408-414</scope>
    <scope>IDENTIFICATION BY MASS SPECTROMETRY</scope>
    <source>
        <strain>OF1</strain>
        <tissue>Hippocampus</tissue>
    </source>
</reference>
<reference key="6">
    <citation type="journal article" date="1996" name="Invest. Ophthalmol. Vis. Sci.">
        <title>Keratin 12-deficient mice have fragile corneal epithelia.</title>
        <authorList>
            <person name="Kao W.W."/>
            <person name="Liu C.Y."/>
            <person name="Converse R.L."/>
            <person name="Shiraishi A."/>
            <person name="Kao C.W."/>
            <person name="Ishizaki M."/>
            <person name="Doetschman T."/>
            <person name="Duffy J."/>
        </authorList>
    </citation>
    <scope>FUNCTION</scope>
    <scope>TISSUE SPECIFICITY</scope>
    <scope>DISRUPTION PHENOTYPE</scope>
</reference>
<reference key="7">
    <citation type="journal article" date="2006" name="Invest. Ophthalmol. Vis. Sci.">
        <title>Expression of keratin 12 and maturation of corneal epithelium during development and postnatal growth.</title>
        <authorList>
            <person name="Tanifuji-Terai N."/>
            <person name="Terai K."/>
            <person name="Hayashi Y."/>
            <person name="Chikama T."/>
            <person name="Kao W.W."/>
        </authorList>
    </citation>
    <scope>DEVELOPMENTAL STAGE</scope>
</reference>
<reference key="8">
    <citation type="journal article" date="2016" name="Hum. Mol. Genet.">
        <title>Keratin 12 missense mutation induces the unfolded protein response and apoptosis in Meesmann epithelial corneal dystrophy.</title>
        <authorList>
            <person name="Allen E.H."/>
            <person name="Courtney D.G."/>
            <person name="Atkinson S.D."/>
            <person name="Moore J.E."/>
            <person name="Mairs L."/>
            <person name="Poulsen E.T."/>
            <person name="Schiroli D."/>
            <person name="Maurizi E."/>
            <person name="Cole C."/>
            <person name="Hickerson R.P."/>
            <person name="James J."/>
            <person name="Murgatroyd H."/>
            <person name="Smith F.J."/>
            <person name="MacEwen C."/>
            <person name="Enghild J.J."/>
            <person name="Nesbit M.A."/>
            <person name="Leslie Pedrioli D.M."/>
            <person name="McLean W.H."/>
            <person name="Moore C.B."/>
        </authorList>
    </citation>
    <scope>TISSUE SPECIFICITY</scope>
</reference>
<proteinExistence type="evidence at protein level"/>